<organism>
    <name type="scientific">Homo sapiens</name>
    <name type="common">Human</name>
    <dbReference type="NCBI Taxonomy" id="9606"/>
    <lineage>
        <taxon>Eukaryota</taxon>
        <taxon>Metazoa</taxon>
        <taxon>Chordata</taxon>
        <taxon>Craniata</taxon>
        <taxon>Vertebrata</taxon>
        <taxon>Euteleostomi</taxon>
        <taxon>Mammalia</taxon>
        <taxon>Eutheria</taxon>
        <taxon>Euarchontoglires</taxon>
        <taxon>Primates</taxon>
        <taxon>Haplorrhini</taxon>
        <taxon>Catarrhini</taxon>
        <taxon>Hominidae</taxon>
        <taxon>Homo</taxon>
    </lineage>
</organism>
<protein>
    <recommendedName>
        <fullName>Ankyrin repeat and SOCS box protein 16</fullName>
        <shortName>ASB-16</shortName>
    </recommendedName>
</protein>
<proteinExistence type="evidence at protein level"/>
<comment type="function">
    <text evidence="1">May be a substrate-recognition component of a SCF-like ECS (Elongin-Cullin-SOCS-box protein) E3 ubiquitin-protein ligase complex which mediates the ubiquitination and subsequent proteasomal degradation of target proteins.</text>
</comment>
<comment type="pathway">
    <text>Protein modification; protein ubiquitination.</text>
</comment>
<comment type="interaction">
    <interactant intactId="EBI-1751918">
        <id>Q96NS5</id>
    </interactant>
    <interactant intactId="EBI-389883">
        <id>P16333</id>
        <label>NCK1</label>
    </interactant>
    <organismsDiffer>false</organismsDiffer>
    <experiments>2</experiments>
</comment>
<comment type="domain">
    <text evidence="1">The SOCS box domain mediates the interaction with the Elongin BC complex, an adapter module in different E3 ubiquitin-protein ligase complexes.</text>
</comment>
<comment type="similarity">
    <text evidence="4">Belongs to the ankyrin SOCS box (ASB) family.</text>
</comment>
<keyword id="KW-0040">ANK repeat</keyword>
<keyword id="KW-1185">Reference proteome</keyword>
<keyword id="KW-0677">Repeat</keyword>
<keyword id="KW-0833">Ubl conjugation pathway</keyword>
<accession>Q96NS5</accession>
<accession>B2RBC0</accession>
<accession>Q8WXK0</accession>
<reference key="1">
    <citation type="journal article" date="2004" name="Nat. Genet.">
        <title>Complete sequencing and characterization of 21,243 full-length human cDNAs.</title>
        <authorList>
            <person name="Ota T."/>
            <person name="Suzuki Y."/>
            <person name="Nishikawa T."/>
            <person name="Otsuki T."/>
            <person name="Sugiyama T."/>
            <person name="Irie R."/>
            <person name="Wakamatsu A."/>
            <person name="Hayashi K."/>
            <person name="Sato H."/>
            <person name="Nagai K."/>
            <person name="Kimura K."/>
            <person name="Makita H."/>
            <person name="Sekine M."/>
            <person name="Obayashi M."/>
            <person name="Nishi T."/>
            <person name="Shibahara T."/>
            <person name="Tanaka T."/>
            <person name="Ishii S."/>
            <person name="Yamamoto J."/>
            <person name="Saito K."/>
            <person name="Kawai Y."/>
            <person name="Isono Y."/>
            <person name="Nakamura Y."/>
            <person name="Nagahari K."/>
            <person name="Murakami K."/>
            <person name="Yasuda T."/>
            <person name="Iwayanagi T."/>
            <person name="Wagatsuma M."/>
            <person name="Shiratori A."/>
            <person name="Sudo H."/>
            <person name="Hosoiri T."/>
            <person name="Kaku Y."/>
            <person name="Kodaira H."/>
            <person name="Kondo H."/>
            <person name="Sugawara M."/>
            <person name="Takahashi M."/>
            <person name="Kanda K."/>
            <person name="Yokoi T."/>
            <person name="Furuya T."/>
            <person name="Kikkawa E."/>
            <person name="Omura Y."/>
            <person name="Abe K."/>
            <person name="Kamihara K."/>
            <person name="Katsuta N."/>
            <person name="Sato K."/>
            <person name="Tanikawa M."/>
            <person name="Yamazaki M."/>
            <person name="Ninomiya K."/>
            <person name="Ishibashi T."/>
            <person name="Yamashita H."/>
            <person name="Murakawa K."/>
            <person name="Fujimori K."/>
            <person name="Tanai H."/>
            <person name="Kimata M."/>
            <person name="Watanabe M."/>
            <person name="Hiraoka S."/>
            <person name="Chiba Y."/>
            <person name="Ishida S."/>
            <person name="Ono Y."/>
            <person name="Takiguchi S."/>
            <person name="Watanabe S."/>
            <person name="Yosida M."/>
            <person name="Hotuta T."/>
            <person name="Kusano J."/>
            <person name="Kanehori K."/>
            <person name="Takahashi-Fujii A."/>
            <person name="Hara H."/>
            <person name="Tanase T.-O."/>
            <person name="Nomura Y."/>
            <person name="Togiya S."/>
            <person name="Komai F."/>
            <person name="Hara R."/>
            <person name="Takeuchi K."/>
            <person name="Arita M."/>
            <person name="Imose N."/>
            <person name="Musashino K."/>
            <person name="Yuuki H."/>
            <person name="Oshima A."/>
            <person name="Sasaki N."/>
            <person name="Aotsuka S."/>
            <person name="Yoshikawa Y."/>
            <person name="Matsunawa H."/>
            <person name="Ichihara T."/>
            <person name="Shiohata N."/>
            <person name="Sano S."/>
            <person name="Moriya S."/>
            <person name="Momiyama H."/>
            <person name="Satoh N."/>
            <person name="Takami S."/>
            <person name="Terashima Y."/>
            <person name="Suzuki O."/>
            <person name="Nakagawa S."/>
            <person name="Senoh A."/>
            <person name="Mizoguchi H."/>
            <person name="Goto Y."/>
            <person name="Shimizu F."/>
            <person name="Wakebe H."/>
            <person name="Hishigaki H."/>
            <person name="Watanabe T."/>
            <person name="Sugiyama A."/>
            <person name="Takemoto M."/>
            <person name="Kawakami B."/>
            <person name="Yamazaki M."/>
            <person name="Watanabe K."/>
            <person name="Kumagai A."/>
            <person name="Itakura S."/>
            <person name="Fukuzumi Y."/>
            <person name="Fujimori Y."/>
            <person name="Komiyama M."/>
            <person name="Tashiro H."/>
            <person name="Tanigami A."/>
            <person name="Fujiwara T."/>
            <person name="Ono T."/>
            <person name="Yamada K."/>
            <person name="Fujii Y."/>
            <person name="Ozaki K."/>
            <person name="Hirao M."/>
            <person name="Ohmori Y."/>
            <person name="Kawabata A."/>
            <person name="Hikiji T."/>
            <person name="Kobatake N."/>
            <person name="Inagaki H."/>
            <person name="Ikema Y."/>
            <person name="Okamoto S."/>
            <person name="Okitani R."/>
            <person name="Kawakami T."/>
            <person name="Noguchi S."/>
            <person name="Itoh T."/>
            <person name="Shigeta K."/>
            <person name="Senba T."/>
            <person name="Matsumura K."/>
            <person name="Nakajima Y."/>
            <person name="Mizuno T."/>
            <person name="Morinaga M."/>
            <person name="Sasaki M."/>
            <person name="Togashi T."/>
            <person name="Oyama M."/>
            <person name="Hata H."/>
            <person name="Watanabe M."/>
            <person name="Komatsu T."/>
            <person name="Mizushima-Sugano J."/>
            <person name="Satoh T."/>
            <person name="Shirai Y."/>
            <person name="Takahashi Y."/>
            <person name="Nakagawa K."/>
            <person name="Okumura K."/>
            <person name="Nagase T."/>
            <person name="Nomura N."/>
            <person name="Kikuchi H."/>
            <person name="Masuho Y."/>
            <person name="Yamashita R."/>
            <person name="Nakai K."/>
            <person name="Yada T."/>
            <person name="Nakamura Y."/>
            <person name="Ohara O."/>
            <person name="Isogai T."/>
            <person name="Sugano S."/>
        </authorList>
    </citation>
    <scope>NUCLEOTIDE SEQUENCE [LARGE SCALE MRNA]</scope>
    <source>
        <tissue>Cerebellum</tissue>
        <tissue>Tongue</tissue>
    </source>
</reference>
<reference key="2">
    <citation type="journal article" date="2006" name="Nature">
        <title>DNA sequence of human chromosome 17 and analysis of rearrangement in the human lineage.</title>
        <authorList>
            <person name="Zody M.C."/>
            <person name="Garber M."/>
            <person name="Adams D.J."/>
            <person name="Sharpe T."/>
            <person name="Harrow J."/>
            <person name="Lupski J.R."/>
            <person name="Nicholson C."/>
            <person name="Searle S.M."/>
            <person name="Wilming L."/>
            <person name="Young S.K."/>
            <person name="Abouelleil A."/>
            <person name="Allen N.R."/>
            <person name="Bi W."/>
            <person name="Bloom T."/>
            <person name="Borowsky M.L."/>
            <person name="Bugalter B.E."/>
            <person name="Butler J."/>
            <person name="Chang J.L."/>
            <person name="Chen C.-K."/>
            <person name="Cook A."/>
            <person name="Corum B."/>
            <person name="Cuomo C.A."/>
            <person name="de Jong P.J."/>
            <person name="DeCaprio D."/>
            <person name="Dewar K."/>
            <person name="FitzGerald M."/>
            <person name="Gilbert J."/>
            <person name="Gibson R."/>
            <person name="Gnerre S."/>
            <person name="Goldstein S."/>
            <person name="Grafham D.V."/>
            <person name="Grocock R."/>
            <person name="Hafez N."/>
            <person name="Hagopian D.S."/>
            <person name="Hart E."/>
            <person name="Norman C.H."/>
            <person name="Humphray S."/>
            <person name="Jaffe D.B."/>
            <person name="Jones M."/>
            <person name="Kamal M."/>
            <person name="Khodiyar V.K."/>
            <person name="LaButti K."/>
            <person name="Laird G."/>
            <person name="Lehoczky J."/>
            <person name="Liu X."/>
            <person name="Lokyitsang T."/>
            <person name="Loveland J."/>
            <person name="Lui A."/>
            <person name="Macdonald P."/>
            <person name="Major J.E."/>
            <person name="Matthews L."/>
            <person name="Mauceli E."/>
            <person name="McCarroll S.A."/>
            <person name="Mihalev A.H."/>
            <person name="Mudge J."/>
            <person name="Nguyen C."/>
            <person name="Nicol R."/>
            <person name="O'Leary S.B."/>
            <person name="Osoegawa K."/>
            <person name="Schwartz D.C."/>
            <person name="Shaw-Smith C."/>
            <person name="Stankiewicz P."/>
            <person name="Steward C."/>
            <person name="Swarbreck D."/>
            <person name="Venkataraman V."/>
            <person name="Whittaker C.A."/>
            <person name="Yang X."/>
            <person name="Zimmer A.R."/>
            <person name="Bradley A."/>
            <person name="Hubbard T."/>
            <person name="Birren B.W."/>
            <person name="Rogers J."/>
            <person name="Lander E.S."/>
            <person name="Nusbaum C."/>
        </authorList>
    </citation>
    <scope>NUCLEOTIDE SEQUENCE [LARGE SCALE GENOMIC DNA]</scope>
</reference>
<reference key="3">
    <citation type="journal article" date="2004" name="Genome Res.">
        <title>The status, quality, and expansion of the NIH full-length cDNA project: the Mammalian Gene Collection (MGC).</title>
        <authorList>
            <consortium name="The MGC Project Team"/>
        </authorList>
    </citation>
    <scope>NUCLEOTIDE SEQUENCE [LARGE SCALE MRNA]</scope>
    <source>
        <tissue>Brain</tissue>
    </source>
</reference>
<reference key="4">
    <citation type="submission" date="2001-07" db="EMBL/GenBank/DDBJ databases">
        <title>SOCS box proteins.</title>
        <authorList>
            <person name="Kile B.T."/>
            <person name="Nicola N.A."/>
        </authorList>
    </citation>
    <scope>NUCLEOTIDE SEQUENCE [MRNA] OF 102-354</scope>
</reference>
<reference key="5">
    <citation type="journal article" date="2011" name="Nature">
        <title>Exome sequencing identifies frequent mutation of the SWI/SNF complex gene PBRM1 in renal carcinoma.</title>
        <authorList>
            <person name="Varela I."/>
            <person name="Tarpey P."/>
            <person name="Raine K."/>
            <person name="Huang D."/>
            <person name="Ong C.K."/>
            <person name="Stephens P."/>
            <person name="Davies H."/>
            <person name="Jones D."/>
            <person name="Lin M.L."/>
            <person name="Teague J."/>
            <person name="Bignell G."/>
            <person name="Butler A."/>
            <person name="Cho J."/>
            <person name="Dalgliesh G.L."/>
            <person name="Galappaththige D."/>
            <person name="Greenman C."/>
            <person name="Hardy C."/>
            <person name="Jia M."/>
            <person name="Latimer C."/>
            <person name="Lau K.W."/>
            <person name="Marshall J."/>
            <person name="McLaren S."/>
            <person name="Menzies A."/>
            <person name="Mudie L."/>
            <person name="Stebbings L."/>
            <person name="Largaespada D.A."/>
            <person name="Wessels L.F.A."/>
            <person name="Richard S."/>
            <person name="Kahnoski R.J."/>
            <person name="Anema J."/>
            <person name="Tuveson D.A."/>
            <person name="Perez-Mancera P.A."/>
            <person name="Mustonen V."/>
            <person name="Fischer A."/>
            <person name="Adams D.J."/>
            <person name="Rust A."/>
            <person name="Chan-On W."/>
            <person name="Subimerb C."/>
            <person name="Dykema K."/>
            <person name="Furge K."/>
            <person name="Campbell P.J."/>
            <person name="Teh B.T."/>
            <person name="Stratton M.R."/>
            <person name="Futreal P.A."/>
        </authorList>
    </citation>
    <scope>VARIANT PRO-173</scope>
</reference>
<sequence>MARETFPFTSSMLRSLRLQQEWLEWEDRRRAAAQQCRSRRCPSSPRARLTRPHRSCRDPAVHQALFSGNLQQVQALFQDEEAANMIVETVSNQLAWSAEQGFWVLTPKTKQTAPLAIATARGYTDCARHLIRQGAELDARVGGRAALHEACARAQFDCVRLLLTFGAKANVLTEEGTTPLHLCTIPESLQCAKLLLEAGATVNLAAGESQETPLHVAAARGLEQHVALYLEHGADVGLRTSQGETALNTACAGAEGPGSCRRHQAAARRLLEAGADARAAGRKRHTPLHNACANGCGGLAELLLRYGARAEVPNGAGHTPMDCALQAVQDSPNWEPEVLFAALLDYGAQPVRPEMLKHCANFPRALEVLLNAYPCVPSCETWVEAVLPELWKEHEAFYSSALCMVNQPRQLQHLARLAVRARLGSRCRQGATRLPLPPLLRDYLLLRVEGCIQ</sequence>
<name>ASB16_HUMAN</name>
<gene>
    <name type="primary">ASB16</name>
</gene>
<dbReference type="EMBL" id="AK054727">
    <property type="protein sequence ID" value="BAB70800.1"/>
    <property type="molecule type" value="mRNA"/>
</dbReference>
<dbReference type="EMBL" id="AK314595">
    <property type="protein sequence ID" value="BAG37167.1"/>
    <property type="molecule type" value="mRNA"/>
</dbReference>
<dbReference type="EMBL" id="AC004596">
    <property type="status" value="NOT_ANNOTATED_CDS"/>
    <property type="molecule type" value="Genomic_DNA"/>
</dbReference>
<dbReference type="EMBL" id="BC075088">
    <property type="protein sequence ID" value="AAH75088.1"/>
    <property type="molecule type" value="mRNA"/>
</dbReference>
<dbReference type="EMBL" id="AF403034">
    <property type="protein sequence ID" value="AAL57353.1"/>
    <property type="molecule type" value="mRNA"/>
</dbReference>
<dbReference type="CCDS" id="CCDS11478.1"/>
<dbReference type="RefSeq" id="NP_543139.4">
    <property type="nucleotide sequence ID" value="NM_080863.4"/>
</dbReference>
<dbReference type="SMR" id="Q96NS5"/>
<dbReference type="BioGRID" id="124958">
    <property type="interactions" value="35"/>
</dbReference>
<dbReference type="FunCoup" id="Q96NS5">
    <property type="interactions" value="515"/>
</dbReference>
<dbReference type="IntAct" id="Q96NS5">
    <property type="interactions" value="7"/>
</dbReference>
<dbReference type="STRING" id="9606.ENSP00000293414"/>
<dbReference type="iPTMnet" id="Q96NS5"/>
<dbReference type="PhosphoSitePlus" id="Q96NS5"/>
<dbReference type="BioMuta" id="ASB16"/>
<dbReference type="DMDM" id="296434399"/>
<dbReference type="jPOST" id="Q96NS5"/>
<dbReference type="PaxDb" id="9606-ENSP00000293414"/>
<dbReference type="PeptideAtlas" id="Q96NS5"/>
<dbReference type="Antibodypedia" id="77181">
    <property type="antibodies" value="6 antibodies from 4 providers"/>
</dbReference>
<dbReference type="DNASU" id="92591"/>
<dbReference type="Ensembl" id="ENST00000293414.6">
    <property type="protein sequence ID" value="ENSP00000293414.1"/>
    <property type="gene ID" value="ENSG00000161664.7"/>
</dbReference>
<dbReference type="GeneID" id="92591"/>
<dbReference type="KEGG" id="hsa:92591"/>
<dbReference type="MANE-Select" id="ENST00000293414.6">
    <property type="protein sequence ID" value="ENSP00000293414.1"/>
    <property type="RefSeq nucleotide sequence ID" value="NM_080863.5"/>
    <property type="RefSeq protein sequence ID" value="NP_543139.4"/>
</dbReference>
<dbReference type="UCSC" id="uc002ifl.1">
    <property type="organism name" value="human"/>
</dbReference>
<dbReference type="AGR" id="HGNC:19768"/>
<dbReference type="CTD" id="92591"/>
<dbReference type="DisGeNET" id="92591"/>
<dbReference type="GeneCards" id="ASB16"/>
<dbReference type="HGNC" id="HGNC:19768">
    <property type="gene designation" value="ASB16"/>
</dbReference>
<dbReference type="HPA" id="ENSG00000161664">
    <property type="expression patterns" value="Tissue enriched (skeletal)"/>
</dbReference>
<dbReference type="MIM" id="615056">
    <property type="type" value="gene"/>
</dbReference>
<dbReference type="neXtProt" id="NX_Q96NS5"/>
<dbReference type="OpenTargets" id="ENSG00000161664"/>
<dbReference type="PharmGKB" id="PA134879678"/>
<dbReference type="VEuPathDB" id="HostDB:ENSG00000161664"/>
<dbReference type="eggNOG" id="KOG0504">
    <property type="taxonomic scope" value="Eukaryota"/>
</dbReference>
<dbReference type="GeneTree" id="ENSGT00940000160773"/>
<dbReference type="HOGENOM" id="CLU_035721_2_0_1"/>
<dbReference type="InParanoid" id="Q96NS5"/>
<dbReference type="OMA" id="VKLYLCY"/>
<dbReference type="OrthoDB" id="194358at2759"/>
<dbReference type="PAN-GO" id="Q96NS5">
    <property type="GO annotations" value="0 GO annotations based on evolutionary models"/>
</dbReference>
<dbReference type="PhylomeDB" id="Q96NS5"/>
<dbReference type="TreeFam" id="TF333494"/>
<dbReference type="PathwayCommons" id="Q96NS5"/>
<dbReference type="Reactome" id="R-HSA-8951664">
    <property type="pathway name" value="Neddylation"/>
</dbReference>
<dbReference type="Reactome" id="R-HSA-983168">
    <property type="pathway name" value="Antigen processing: Ubiquitination &amp; Proteasome degradation"/>
</dbReference>
<dbReference type="SignaLink" id="Q96NS5"/>
<dbReference type="UniPathway" id="UPA00143"/>
<dbReference type="BioGRID-ORCS" id="92591">
    <property type="hits" value="24 hits in 1205 CRISPR screens"/>
</dbReference>
<dbReference type="GenomeRNAi" id="92591"/>
<dbReference type="Pharos" id="Q96NS5">
    <property type="development level" value="Tdark"/>
</dbReference>
<dbReference type="PRO" id="PR:Q96NS5"/>
<dbReference type="Proteomes" id="UP000005640">
    <property type="component" value="Chromosome 17"/>
</dbReference>
<dbReference type="RNAct" id="Q96NS5">
    <property type="molecule type" value="protein"/>
</dbReference>
<dbReference type="Bgee" id="ENSG00000161664">
    <property type="expression patterns" value="Expressed in hindlimb stylopod muscle and 107 other cell types or tissues"/>
</dbReference>
<dbReference type="ExpressionAtlas" id="Q96NS5">
    <property type="expression patterns" value="baseline and differential"/>
</dbReference>
<dbReference type="GO" id="GO:0005829">
    <property type="term" value="C:cytosol"/>
    <property type="evidence" value="ECO:0000304"/>
    <property type="project" value="Reactome"/>
</dbReference>
<dbReference type="GO" id="GO:0035556">
    <property type="term" value="P:intracellular signal transduction"/>
    <property type="evidence" value="ECO:0007669"/>
    <property type="project" value="InterPro"/>
</dbReference>
<dbReference type="GO" id="GO:0016567">
    <property type="term" value="P:protein ubiquitination"/>
    <property type="evidence" value="ECO:0007669"/>
    <property type="project" value="UniProtKB-UniPathway"/>
</dbReference>
<dbReference type="CDD" id="cd03716">
    <property type="entry name" value="SOCS_ASB_like"/>
    <property type="match status" value="1"/>
</dbReference>
<dbReference type="FunFam" id="1.25.40.20:FF:000154">
    <property type="entry name" value="Ankyrin repeat and SOCS box containing 10"/>
    <property type="match status" value="1"/>
</dbReference>
<dbReference type="FunFam" id="1.25.40.20:FF:000228">
    <property type="entry name" value="Ankyrin repeat and SOCS box containing 10"/>
    <property type="match status" value="1"/>
</dbReference>
<dbReference type="Gene3D" id="1.25.40.20">
    <property type="entry name" value="Ankyrin repeat-containing domain"/>
    <property type="match status" value="3"/>
</dbReference>
<dbReference type="Gene3D" id="1.10.750.20">
    <property type="entry name" value="SOCS box"/>
    <property type="match status" value="1"/>
</dbReference>
<dbReference type="InterPro" id="IPR051573">
    <property type="entry name" value="Ankyrin-SOCS_box_domain"/>
</dbReference>
<dbReference type="InterPro" id="IPR002110">
    <property type="entry name" value="Ankyrin_rpt"/>
</dbReference>
<dbReference type="InterPro" id="IPR036770">
    <property type="entry name" value="Ankyrin_rpt-contain_sf"/>
</dbReference>
<dbReference type="InterPro" id="IPR001496">
    <property type="entry name" value="SOCS_box"/>
</dbReference>
<dbReference type="InterPro" id="IPR036036">
    <property type="entry name" value="SOCS_box-like_dom_sf"/>
</dbReference>
<dbReference type="PANTHER" id="PTHR24136:SF15">
    <property type="entry name" value="ANK_REP_REGION DOMAIN-CONTAINING PROTEIN"/>
    <property type="match status" value="1"/>
</dbReference>
<dbReference type="PANTHER" id="PTHR24136">
    <property type="entry name" value="SOWAH (DROSOPHILA) HOMOLOG"/>
    <property type="match status" value="1"/>
</dbReference>
<dbReference type="Pfam" id="PF00023">
    <property type="entry name" value="Ank"/>
    <property type="match status" value="2"/>
</dbReference>
<dbReference type="Pfam" id="PF12796">
    <property type="entry name" value="Ank_2"/>
    <property type="match status" value="1"/>
</dbReference>
<dbReference type="Pfam" id="PF07525">
    <property type="entry name" value="SOCS_box"/>
    <property type="match status" value="1"/>
</dbReference>
<dbReference type="SMART" id="SM00248">
    <property type="entry name" value="ANK"/>
    <property type="match status" value="7"/>
</dbReference>
<dbReference type="SMART" id="SM00969">
    <property type="entry name" value="SOCS_box"/>
    <property type="match status" value="1"/>
</dbReference>
<dbReference type="SUPFAM" id="SSF48403">
    <property type="entry name" value="Ankyrin repeat"/>
    <property type="match status" value="1"/>
</dbReference>
<dbReference type="SUPFAM" id="SSF158235">
    <property type="entry name" value="SOCS box-like"/>
    <property type="match status" value="1"/>
</dbReference>
<dbReference type="PROSITE" id="PS50297">
    <property type="entry name" value="ANK_REP_REGION"/>
    <property type="match status" value="1"/>
</dbReference>
<dbReference type="PROSITE" id="PS50088">
    <property type="entry name" value="ANK_REPEAT"/>
    <property type="match status" value="4"/>
</dbReference>
<dbReference type="PROSITE" id="PS50225">
    <property type="entry name" value="SOCS"/>
    <property type="match status" value="1"/>
</dbReference>
<evidence type="ECO:0000250" key="1"/>
<evidence type="ECO:0000255" key="2">
    <source>
        <dbReference type="PROSITE-ProRule" id="PRU00194"/>
    </source>
</evidence>
<evidence type="ECO:0000269" key="3">
    <source>
    </source>
</evidence>
<evidence type="ECO:0000305" key="4"/>
<feature type="chain" id="PRO_0000066956" description="Ankyrin repeat and SOCS box protein 16">
    <location>
        <begin position="1"/>
        <end position="453"/>
    </location>
</feature>
<feature type="repeat" description="ANK 1">
    <location>
        <begin position="56"/>
        <end position="85"/>
    </location>
</feature>
<feature type="repeat" description="ANK 2">
    <location>
        <begin position="110"/>
        <end position="139"/>
    </location>
</feature>
<feature type="repeat" description="ANK 3">
    <location>
        <begin position="142"/>
        <end position="171"/>
    </location>
</feature>
<feature type="repeat" description="ANK 4">
    <location>
        <begin position="175"/>
        <end position="204"/>
    </location>
</feature>
<feature type="repeat" description="ANK 5">
    <location>
        <begin position="209"/>
        <end position="238"/>
    </location>
</feature>
<feature type="repeat" description="ANK 6">
    <location>
        <begin position="242"/>
        <end position="279"/>
    </location>
</feature>
<feature type="repeat" description="ANK 7">
    <location>
        <begin position="283"/>
        <end position="312"/>
    </location>
</feature>
<feature type="domain" description="SOCS box" evidence="2">
    <location>
        <begin position="398"/>
        <end position="450"/>
    </location>
</feature>
<feature type="sequence variant" id="VAR_064697" description="Found in a clear cell renal carcinoma case; somatic mutation." evidence="3">
    <original>T</original>
    <variation>P</variation>
    <location>
        <position position="173"/>
    </location>
</feature>
<feature type="sequence variant" id="VAR_059127" description="In dbSNP:rs7224330.">
    <original>T</original>
    <variation>I</variation>
    <location>
        <position position="240"/>
    </location>
</feature>
<feature type="sequence conflict" description="In Ref. 1; BAB70800/BAG37167 and 3; AAH75088." evidence="4" ref="1 3">
    <original>Q</original>
    <variation>H</variation>
    <location>
        <position position="63"/>
    </location>
</feature>
<feature type="sequence conflict" description="In Ref. 1; BAB70800/BAG37167, 3; AAH75088 and 4; AAL57353." evidence="4" ref="1 3 4">
    <original>T</original>
    <variation>A</variation>
    <location>
        <position position="249"/>
    </location>
</feature>
<feature type="sequence conflict" description="In Ref. 1; BAB70800/BAG37167, 3; AAH75088 and 4; AAL57353." evidence="4" ref="1 3 4">
    <original>N</original>
    <variation>S</variation>
    <location>
        <position position="294"/>
    </location>
</feature>
<feature type="sequence conflict" description="In Ref. 1; BAB70800/BAG37167, 3; AAH75088 and 4; AAL57353." evidence="4" ref="1 3 4">
    <original>S</original>
    <variation>A</variation>
    <location>
        <position position="331"/>
    </location>
</feature>